<gene>
    <name evidence="2" type="primary">SPART-AS1</name>
    <name evidence="2" type="synonym">C13orf43</name>
    <name evidence="2" type="synonym">SPG20-AS1</name>
    <name evidence="2" type="synonym">SPG20OS</name>
</gene>
<organism>
    <name type="scientific">Homo sapiens</name>
    <name type="common">Human</name>
    <dbReference type="NCBI Taxonomy" id="9606"/>
    <lineage>
        <taxon>Eukaryota</taxon>
        <taxon>Metazoa</taxon>
        <taxon>Chordata</taxon>
        <taxon>Craniata</taxon>
        <taxon>Vertebrata</taxon>
        <taxon>Euteleostomi</taxon>
        <taxon>Mammalia</taxon>
        <taxon>Eutheria</taxon>
        <taxon>Euarchontoglires</taxon>
        <taxon>Primates</taxon>
        <taxon>Haplorrhini</taxon>
        <taxon>Catarrhini</taxon>
        <taxon>Hominidae</taxon>
        <taxon>Homo</taxon>
    </lineage>
</organism>
<feature type="chain" id="PRO_0000409554" description="Putative uncharacterized protein SPART-AS1">
    <location>
        <begin position="1"/>
        <end position="52"/>
    </location>
</feature>
<evidence type="ECO:0000305" key="1"/>
<evidence type="ECO:0000312" key="2">
    <source>
        <dbReference type="HGNC" id="HGNC:39933"/>
    </source>
</evidence>
<protein>
    <recommendedName>
        <fullName evidence="2">Putative uncharacterized protein SPART-AS1</fullName>
    </recommendedName>
    <alternativeName>
        <fullName evidence="2">SPART antisense RNA 1</fullName>
    </alternativeName>
    <alternativeName>
        <fullName evidence="2">SPG20 antisense RNA 1</fullName>
    </alternativeName>
    <alternativeName>
        <fullName evidence="2">SPG20 opposite strand transcript protein</fullName>
    </alternativeName>
</protein>
<dbReference type="EMBL" id="AL139377">
    <property type="status" value="NOT_ANNOTATED_CDS"/>
    <property type="molecule type" value="Genomic_DNA"/>
</dbReference>
<dbReference type="SMR" id="P0CW21"/>
<dbReference type="BioMuta" id="HGNC:39933"/>
<dbReference type="ProteomicsDB" id="52520"/>
<dbReference type="AGR" id="HGNC:39933"/>
<dbReference type="GeneCards" id="SPART-AS1"/>
<dbReference type="HGNC" id="HGNC:39933">
    <property type="gene designation" value="SPART-AS1"/>
</dbReference>
<dbReference type="neXtProt" id="NX_P0CW21"/>
<dbReference type="InParanoid" id="P0CW21"/>
<dbReference type="PAN-GO" id="P0CW21">
    <property type="GO annotations" value="0 GO annotations based on evolutionary models"/>
</dbReference>
<dbReference type="PhylomeDB" id="P0CW21"/>
<dbReference type="TreeFam" id="TF340781"/>
<dbReference type="Pharos" id="P0CW21">
    <property type="development level" value="Tdark"/>
</dbReference>
<dbReference type="PRO" id="PR:P0CW21"/>
<dbReference type="Proteomes" id="UP000005640">
    <property type="component" value="Unplaced"/>
</dbReference>
<dbReference type="RNAct" id="P0CW21">
    <property type="molecule type" value="protein"/>
</dbReference>
<proteinExistence type="uncertain"/>
<keyword id="KW-1185">Reference proteome</keyword>
<sequence length="52" mass="6167">MKDIGHLQHLAQRLQWNRRAVNICGMHGWTKDLSPHSRMPSMLEHVKHYMSC</sequence>
<accession>P0CW21</accession>
<comment type="caution">
    <text evidence="1">Product of a dubious gene prediction.</text>
</comment>
<reference key="1">
    <citation type="journal article" date="2004" name="Nature">
        <title>The DNA sequence and analysis of human chromosome 13.</title>
        <authorList>
            <person name="Dunham A."/>
            <person name="Matthews L.H."/>
            <person name="Burton J."/>
            <person name="Ashurst J.L."/>
            <person name="Howe K.L."/>
            <person name="Ashcroft K.J."/>
            <person name="Beare D.M."/>
            <person name="Burford D.C."/>
            <person name="Hunt S.E."/>
            <person name="Griffiths-Jones S."/>
            <person name="Jones M.C."/>
            <person name="Keenan S.J."/>
            <person name="Oliver K."/>
            <person name="Scott C.E."/>
            <person name="Ainscough R."/>
            <person name="Almeida J.P."/>
            <person name="Ambrose K.D."/>
            <person name="Andrews D.T."/>
            <person name="Ashwell R.I.S."/>
            <person name="Babbage A.K."/>
            <person name="Bagguley C.L."/>
            <person name="Bailey J."/>
            <person name="Bannerjee R."/>
            <person name="Barlow K.F."/>
            <person name="Bates K."/>
            <person name="Beasley H."/>
            <person name="Bird C.P."/>
            <person name="Bray-Allen S."/>
            <person name="Brown A.J."/>
            <person name="Brown J.Y."/>
            <person name="Burrill W."/>
            <person name="Carder C."/>
            <person name="Carter N.P."/>
            <person name="Chapman J.C."/>
            <person name="Clamp M.E."/>
            <person name="Clark S.Y."/>
            <person name="Clarke G."/>
            <person name="Clee C.M."/>
            <person name="Clegg S.C."/>
            <person name="Cobley V."/>
            <person name="Collins J.E."/>
            <person name="Corby N."/>
            <person name="Coville G.J."/>
            <person name="Deloukas P."/>
            <person name="Dhami P."/>
            <person name="Dunham I."/>
            <person name="Dunn M."/>
            <person name="Earthrowl M.E."/>
            <person name="Ellington A.G."/>
            <person name="Faulkner L."/>
            <person name="Frankish A.G."/>
            <person name="Frankland J."/>
            <person name="French L."/>
            <person name="Garner P."/>
            <person name="Garnett J."/>
            <person name="Gilbert J.G.R."/>
            <person name="Gilson C.J."/>
            <person name="Ghori J."/>
            <person name="Grafham D.V."/>
            <person name="Gribble S.M."/>
            <person name="Griffiths C."/>
            <person name="Hall R.E."/>
            <person name="Hammond S."/>
            <person name="Harley J.L."/>
            <person name="Hart E.A."/>
            <person name="Heath P.D."/>
            <person name="Howden P.J."/>
            <person name="Huckle E.J."/>
            <person name="Hunt P.J."/>
            <person name="Hunt A.R."/>
            <person name="Johnson C."/>
            <person name="Johnson D."/>
            <person name="Kay M."/>
            <person name="Kimberley A.M."/>
            <person name="King A."/>
            <person name="Laird G.K."/>
            <person name="Langford C.J."/>
            <person name="Lawlor S."/>
            <person name="Leongamornlert D.A."/>
            <person name="Lloyd D.M."/>
            <person name="Lloyd C."/>
            <person name="Loveland J.E."/>
            <person name="Lovell J."/>
            <person name="Martin S."/>
            <person name="Mashreghi-Mohammadi M."/>
            <person name="McLaren S.J."/>
            <person name="McMurray A."/>
            <person name="Milne S."/>
            <person name="Moore M.J.F."/>
            <person name="Nickerson T."/>
            <person name="Palmer S.A."/>
            <person name="Pearce A.V."/>
            <person name="Peck A.I."/>
            <person name="Pelan S."/>
            <person name="Phillimore B."/>
            <person name="Porter K.M."/>
            <person name="Rice C.M."/>
            <person name="Searle S."/>
            <person name="Sehra H.K."/>
            <person name="Shownkeen R."/>
            <person name="Skuce C.D."/>
            <person name="Smith M."/>
            <person name="Steward C.A."/>
            <person name="Sycamore N."/>
            <person name="Tester J."/>
            <person name="Thomas D.W."/>
            <person name="Tracey A."/>
            <person name="Tromans A."/>
            <person name="Tubby B."/>
            <person name="Wall M."/>
            <person name="Wallis J.M."/>
            <person name="West A.P."/>
            <person name="Whitehead S.L."/>
            <person name="Willey D.L."/>
            <person name="Wilming L."/>
            <person name="Wray P.W."/>
            <person name="Wright M.W."/>
            <person name="Young L."/>
            <person name="Coulson A."/>
            <person name="Durbin R.M."/>
            <person name="Hubbard T."/>
            <person name="Sulston J.E."/>
            <person name="Beck S."/>
            <person name="Bentley D.R."/>
            <person name="Rogers J."/>
            <person name="Ross M.T."/>
        </authorList>
    </citation>
    <scope>NUCLEOTIDE SEQUENCE [LARGE SCALE GENOMIC DNA]</scope>
</reference>
<name>SPGOS_HUMAN</name>